<keyword id="KW-0030">Aminoacyl-tRNA synthetase</keyword>
<keyword id="KW-0067">ATP-binding</keyword>
<keyword id="KW-0963">Cytoplasm</keyword>
<keyword id="KW-0436">Ligase</keyword>
<keyword id="KW-0547">Nucleotide-binding</keyword>
<keyword id="KW-0648">Protein biosynthesis</keyword>
<keyword id="KW-1185">Reference proteome</keyword>
<comment type="function">
    <text evidence="1">Catalyzes the attachment of serine to tRNA(Ser). Is also able to aminoacylate tRNA(Sec) with serine, to form the misacylated tRNA L-seryl-tRNA(Sec), which will be further converted into selenocysteinyl-tRNA(Sec).</text>
</comment>
<comment type="catalytic activity">
    <reaction evidence="1">
        <text>tRNA(Ser) + L-serine + ATP = L-seryl-tRNA(Ser) + AMP + diphosphate + H(+)</text>
        <dbReference type="Rhea" id="RHEA:12292"/>
        <dbReference type="Rhea" id="RHEA-COMP:9669"/>
        <dbReference type="Rhea" id="RHEA-COMP:9703"/>
        <dbReference type="ChEBI" id="CHEBI:15378"/>
        <dbReference type="ChEBI" id="CHEBI:30616"/>
        <dbReference type="ChEBI" id="CHEBI:33019"/>
        <dbReference type="ChEBI" id="CHEBI:33384"/>
        <dbReference type="ChEBI" id="CHEBI:78442"/>
        <dbReference type="ChEBI" id="CHEBI:78533"/>
        <dbReference type="ChEBI" id="CHEBI:456215"/>
        <dbReference type="EC" id="6.1.1.11"/>
    </reaction>
</comment>
<comment type="catalytic activity">
    <reaction evidence="1">
        <text>tRNA(Sec) + L-serine + ATP = L-seryl-tRNA(Sec) + AMP + diphosphate + H(+)</text>
        <dbReference type="Rhea" id="RHEA:42580"/>
        <dbReference type="Rhea" id="RHEA-COMP:9742"/>
        <dbReference type="Rhea" id="RHEA-COMP:10128"/>
        <dbReference type="ChEBI" id="CHEBI:15378"/>
        <dbReference type="ChEBI" id="CHEBI:30616"/>
        <dbReference type="ChEBI" id="CHEBI:33019"/>
        <dbReference type="ChEBI" id="CHEBI:33384"/>
        <dbReference type="ChEBI" id="CHEBI:78442"/>
        <dbReference type="ChEBI" id="CHEBI:78533"/>
        <dbReference type="ChEBI" id="CHEBI:456215"/>
        <dbReference type="EC" id="6.1.1.11"/>
    </reaction>
</comment>
<comment type="pathway">
    <text evidence="1">Aminoacyl-tRNA biosynthesis; selenocysteinyl-tRNA(Sec) biosynthesis; L-seryl-tRNA(Sec) from L-serine and tRNA(Sec): step 1/1.</text>
</comment>
<comment type="subunit">
    <text evidence="1">Homodimer. The tRNA molecule binds across the dimer.</text>
</comment>
<comment type="subcellular location">
    <subcellularLocation>
        <location evidence="1">Cytoplasm</location>
    </subcellularLocation>
</comment>
<comment type="domain">
    <text evidence="1">Consists of two distinct domains, a catalytic core and a N-terminal extension that is involved in tRNA binding.</text>
</comment>
<comment type="similarity">
    <text evidence="1">Belongs to the class-II aminoacyl-tRNA synthetase family. Type-1 seryl-tRNA synthetase subfamily.</text>
</comment>
<name>SYS_BURPS</name>
<feature type="chain" id="PRO_0000122023" description="Serine--tRNA ligase">
    <location>
        <begin position="1"/>
        <end position="433"/>
    </location>
</feature>
<feature type="binding site" evidence="1">
    <location>
        <begin position="235"/>
        <end position="237"/>
    </location>
    <ligand>
        <name>L-serine</name>
        <dbReference type="ChEBI" id="CHEBI:33384"/>
    </ligand>
</feature>
<feature type="binding site" evidence="1">
    <location>
        <begin position="266"/>
        <end position="268"/>
    </location>
    <ligand>
        <name>ATP</name>
        <dbReference type="ChEBI" id="CHEBI:30616"/>
    </ligand>
</feature>
<feature type="binding site" evidence="1">
    <location>
        <position position="289"/>
    </location>
    <ligand>
        <name>L-serine</name>
        <dbReference type="ChEBI" id="CHEBI:33384"/>
    </ligand>
</feature>
<feature type="binding site" evidence="1">
    <location>
        <begin position="353"/>
        <end position="356"/>
    </location>
    <ligand>
        <name>ATP</name>
        <dbReference type="ChEBI" id="CHEBI:30616"/>
    </ligand>
</feature>
<feature type="binding site" evidence="1">
    <location>
        <position position="388"/>
    </location>
    <ligand>
        <name>L-serine</name>
        <dbReference type="ChEBI" id="CHEBI:33384"/>
    </ligand>
</feature>
<organism>
    <name type="scientific">Burkholderia pseudomallei (strain K96243)</name>
    <dbReference type="NCBI Taxonomy" id="272560"/>
    <lineage>
        <taxon>Bacteria</taxon>
        <taxon>Pseudomonadati</taxon>
        <taxon>Pseudomonadota</taxon>
        <taxon>Betaproteobacteria</taxon>
        <taxon>Burkholderiales</taxon>
        <taxon>Burkholderiaceae</taxon>
        <taxon>Burkholderia</taxon>
        <taxon>pseudomallei group</taxon>
    </lineage>
</organism>
<evidence type="ECO:0000255" key="1">
    <source>
        <dbReference type="HAMAP-Rule" id="MF_00176"/>
    </source>
</evidence>
<sequence>MLDIQLLRKDLDGVAKRLADRGYPLDVAAFSALEAERRAIQTRTEELQARRNSLSKQIGAMKGRGEDTSAVMAEVGGIGDEMKASAVKLDEIQARLSELMLEMPNVPHESVPVGRDETENVEVRRWGAPRQFDFDVKDHVDVGTPLGLDFETGAKLSGARFTVLRGPIARLHRALAQFMLDTHTQQHGYSETYTPYIVNPDVLYGTGQLPKFAEDMFRVEKGGAENTVTQYLISTSEISLTNTVRDSIVEASALPIKLTAHSPCFRSEAGSYGRDTRGMIRQHQFDKVEMVQIVAPEASYAALDEMVGHAEAILQKLELPYRVVALCTGDMGFSAAKTFDLEVWLPAQNTYREISSCSNTESFQARRMQARFRNAQGKPELVHTLNGSGLAVGRTLVAVLENYQNADGSVTVPVALRPYMGGVERIDAPSSAA</sequence>
<dbReference type="EC" id="6.1.1.11" evidence="1"/>
<dbReference type="EMBL" id="BX571965">
    <property type="protein sequence ID" value="CAH36608.1"/>
    <property type="molecule type" value="Genomic_DNA"/>
</dbReference>
<dbReference type="RefSeq" id="WP_004186129.1">
    <property type="nucleotide sequence ID" value="NZ_CP009538.1"/>
</dbReference>
<dbReference type="RefSeq" id="YP_109196.1">
    <property type="nucleotide sequence ID" value="NC_006350.1"/>
</dbReference>
<dbReference type="SMR" id="Q63RS1"/>
<dbReference type="STRING" id="272560.BPSL2600"/>
<dbReference type="GeneID" id="93061177"/>
<dbReference type="KEGG" id="bps:BPSL2600"/>
<dbReference type="PATRIC" id="fig|272560.51.peg.2756"/>
<dbReference type="eggNOG" id="COG0172">
    <property type="taxonomic scope" value="Bacteria"/>
</dbReference>
<dbReference type="UniPathway" id="UPA00906">
    <property type="reaction ID" value="UER00895"/>
</dbReference>
<dbReference type="Proteomes" id="UP000000605">
    <property type="component" value="Chromosome 1"/>
</dbReference>
<dbReference type="GO" id="GO:0005737">
    <property type="term" value="C:cytoplasm"/>
    <property type="evidence" value="ECO:0007669"/>
    <property type="project" value="UniProtKB-SubCell"/>
</dbReference>
<dbReference type="GO" id="GO:0005524">
    <property type="term" value="F:ATP binding"/>
    <property type="evidence" value="ECO:0007669"/>
    <property type="project" value="UniProtKB-UniRule"/>
</dbReference>
<dbReference type="GO" id="GO:0004828">
    <property type="term" value="F:serine-tRNA ligase activity"/>
    <property type="evidence" value="ECO:0007669"/>
    <property type="project" value="UniProtKB-UniRule"/>
</dbReference>
<dbReference type="GO" id="GO:0016260">
    <property type="term" value="P:selenocysteine biosynthetic process"/>
    <property type="evidence" value="ECO:0007669"/>
    <property type="project" value="UniProtKB-UniRule"/>
</dbReference>
<dbReference type="GO" id="GO:0006434">
    <property type="term" value="P:seryl-tRNA aminoacylation"/>
    <property type="evidence" value="ECO:0007669"/>
    <property type="project" value="UniProtKB-UniRule"/>
</dbReference>
<dbReference type="CDD" id="cd00770">
    <property type="entry name" value="SerRS_core"/>
    <property type="match status" value="1"/>
</dbReference>
<dbReference type="Gene3D" id="3.30.930.10">
    <property type="entry name" value="Bira Bifunctional Protein, Domain 2"/>
    <property type="match status" value="1"/>
</dbReference>
<dbReference type="Gene3D" id="1.10.287.40">
    <property type="entry name" value="Serine-tRNA synthetase, tRNA binding domain"/>
    <property type="match status" value="1"/>
</dbReference>
<dbReference type="HAMAP" id="MF_00176">
    <property type="entry name" value="Ser_tRNA_synth_type1"/>
    <property type="match status" value="1"/>
</dbReference>
<dbReference type="InterPro" id="IPR002314">
    <property type="entry name" value="aa-tRNA-synt_IIb"/>
</dbReference>
<dbReference type="InterPro" id="IPR006195">
    <property type="entry name" value="aa-tRNA-synth_II"/>
</dbReference>
<dbReference type="InterPro" id="IPR045864">
    <property type="entry name" value="aa-tRNA-synth_II/BPL/LPL"/>
</dbReference>
<dbReference type="InterPro" id="IPR002317">
    <property type="entry name" value="Ser-tRNA-ligase_type_1"/>
</dbReference>
<dbReference type="InterPro" id="IPR015866">
    <property type="entry name" value="Ser-tRNA-synth_1_N"/>
</dbReference>
<dbReference type="InterPro" id="IPR042103">
    <property type="entry name" value="SerRS_1_N_sf"/>
</dbReference>
<dbReference type="InterPro" id="IPR033729">
    <property type="entry name" value="SerRS_core"/>
</dbReference>
<dbReference type="InterPro" id="IPR010978">
    <property type="entry name" value="tRNA-bd_arm"/>
</dbReference>
<dbReference type="NCBIfam" id="TIGR00414">
    <property type="entry name" value="serS"/>
    <property type="match status" value="1"/>
</dbReference>
<dbReference type="PANTHER" id="PTHR43697:SF1">
    <property type="entry name" value="SERINE--TRNA LIGASE"/>
    <property type="match status" value="1"/>
</dbReference>
<dbReference type="PANTHER" id="PTHR43697">
    <property type="entry name" value="SERYL-TRNA SYNTHETASE"/>
    <property type="match status" value="1"/>
</dbReference>
<dbReference type="Pfam" id="PF02403">
    <property type="entry name" value="Seryl_tRNA_N"/>
    <property type="match status" value="1"/>
</dbReference>
<dbReference type="Pfam" id="PF00587">
    <property type="entry name" value="tRNA-synt_2b"/>
    <property type="match status" value="1"/>
</dbReference>
<dbReference type="PIRSF" id="PIRSF001529">
    <property type="entry name" value="Ser-tRNA-synth_IIa"/>
    <property type="match status" value="1"/>
</dbReference>
<dbReference type="PRINTS" id="PR00981">
    <property type="entry name" value="TRNASYNTHSER"/>
</dbReference>
<dbReference type="SUPFAM" id="SSF55681">
    <property type="entry name" value="Class II aaRS and biotin synthetases"/>
    <property type="match status" value="1"/>
</dbReference>
<dbReference type="SUPFAM" id="SSF46589">
    <property type="entry name" value="tRNA-binding arm"/>
    <property type="match status" value="1"/>
</dbReference>
<dbReference type="PROSITE" id="PS50862">
    <property type="entry name" value="AA_TRNA_LIGASE_II"/>
    <property type="match status" value="1"/>
</dbReference>
<gene>
    <name evidence="1" type="primary">serS</name>
    <name type="ordered locus">BPSL2600</name>
</gene>
<protein>
    <recommendedName>
        <fullName evidence="1">Serine--tRNA ligase</fullName>
        <ecNumber evidence="1">6.1.1.11</ecNumber>
    </recommendedName>
    <alternativeName>
        <fullName evidence="1">Seryl-tRNA synthetase</fullName>
        <shortName evidence="1">SerRS</shortName>
    </alternativeName>
    <alternativeName>
        <fullName evidence="1">Seryl-tRNA(Ser/Sec) synthetase</fullName>
    </alternativeName>
</protein>
<proteinExistence type="inferred from homology"/>
<reference key="1">
    <citation type="journal article" date="2004" name="Proc. Natl. Acad. Sci. U.S.A.">
        <title>Genomic plasticity of the causative agent of melioidosis, Burkholderia pseudomallei.</title>
        <authorList>
            <person name="Holden M.T.G."/>
            <person name="Titball R.W."/>
            <person name="Peacock S.J."/>
            <person name="Cerdeno-Tarraga A.-M."/>
            <person name="Atkins T."/>
            <person name="Crossman L.C."/>
            <person name="Pitt T."/>
            <person name="Churcher C."/>
            <person name="Mungall K.L."/>
            <person name="Bentley S.D."/>
            <person name="Sebaihia M."/>
            <person name="Thomson N.R."/>
            <person name="Bason N."/>
            <person name="Beacham I.R."/>
            <person name="Brooks K."/>
            <person name="Brown K.A."/>
            <person name="Brown N.F."/>
            <person name="Challis G.L."/>
            <person name="Cherevach I."/>
            <person name="Chillingworth T."/>
            <person name="Cronin A."/>
            <person name="Crossett B."/>
            <person name="Davis P."/>
            <person name="DeShazer D."/>
            <person name="Feltwell T."/>
            <person name="Fraser A."/>
            <person name="Hance Z."/>
            <person name="Hauser H."/>
            <person name="Holroyd S."/>
            <person name="Jagels K."/>
            <person name="Keith K.E."/>
            <person name="Maddison M."/>
            <person name="Moule S."/>
            <person name="Price C."/>
            <person name="Quail M.A."/>
            <person name="Rabbinowitsch E."/>
            <person name="Rutherford K."/>
            <person name="Sanders M."/>
            <person name="Simmonds M."/>
            <person name="Songsivilai S."/>
            <person name="Stevens K."/>
            <person name="Tumapa S."/>
            <person name="Vesaratchavest M."/>
            <person name="Whitehead S."/>
            <person name="Yeats C."/>
            <person name="Barrell B.G."/>
            <person name="Oyston P.C.F."/>
            <person name="Parkhill J."/>
        </authorList>
    </citation>
    <scope>NUCLEOTIDE SEQUENCE [LARGE SCALE GENOMIC DNA]</scope>
    <source>
        <strain>K96243</strain>
    </source>
</reference>
<accession>Q63RS1</accession>